<organism>
    <name type="scientific">Paramecium bursaria Chlorella virus NC1A</name>
    <name type="common">PBCV-NC1A</name>
    <dbReference type="NCBI Taxonomy" id="46020"/>
    <lineage>
        <taxon>Viruses</taxon>
        <taxon>Varidnaviria</taxon>
        <taxon>Bamfordvirae</taxon>
        <taxon>Nucleocytoviricota</taxon>
        <taxon>Megaviricetes</taxon>
        <taxon>Algavirales</taxon>
        <taxon>Phycodnaviridae</taxon>
        <taxon>Chlorovirus</taxon>
    </lineage>
</organism>
<protein>
    <recommendedName>
        <fullName>Modification methylase CviBIII</fullName>
        <shortName evidence="3">M.CviBIII</shortName>
        <ecNumber>2.1.1.72</ecNumber>
    </recommendedName>
    <alternativeName>
        <fullName>Adenine-specific methyltransferase CviBIII</fullName>
    </alternativeName>
    <alternativeName>
        <fullName evidence="2">Orphan methyltransferase M.CviBIII</fullName>
    </alternativeName>
</protein>
<comment type="function">
    <text evidence="1 2">A gamma subtype methylase that recognizes the double-stranded sequence 5'-TCGA-3' and methylates A-4 on both strands.</text>
</comment>
<comment type="catalytic activity">
    <reaction>
        <text>a 2'-deoxyadenosine in DNA + S-adenosyl-L-methionine = an N(6)-methyl-2'-deoxyadenosine in DNA + S-adenosyl-L-homocysteine + H(+)</text>
        <dbReference type="Rhea" id="RHEA:15197"/>
        <dbReference type="Rhea" id="RHEA-COMP:12418"/>
        <dbReference type="Rhea" id="RHEA-COMP:12419"/>
        <dbReference type="ChEBI" id="CHEBI:15378"/>
        <dbReference type="ChEBI" id="CHEBI:57856"/>
        <dbReference type="ChEBI" id="CHEBI:59789"/>
        <dbReference type="ChEBI" id="CHEBI:90615"/>
        <dbReference type="ChEBI" id="CHEBI:90616"/>
        <dbReference type="EC" id="2.1.1.72"/>
    </reaction>
</comment>
<comment type="disruption phenotype">
    <text evidence="1">Not essential for viral replication it can be deleted.</text>
</comment>
<comment type="similarity">
    <text evidence="4">Belongs to the N(4)/N(6)-methyltransferase family.</text>
</comment>
<name>MTC3_PBCVC</name>
<dbReference type="EC" id="2.1.1.72"/>
<dbReference type="EMBL" id="X06618">
    <property type="protein sequence ID" value="CAA29835.1"/>
    <property type="molecule type" value="Genomic_DNA"/>
</dbReference>
<dbReference type="SMR" id="P10835"/>
<dbReference type="REBASE" id="752">
    <property type="entry name" value="M.CviBIII"/>
</dbReference>
<dbReference type="GO" id="GO:0003677">
    <property type="term" value="F:DNA binding"/>
    <property type="evidence" value="ECO:0007669"/>
    <property type="project" value="UniProtKB-KW"/>
</dbReference>
<dbReference type="GO" id="GO:0009007">
    <property type="term" value="F:site-specific DNA-methyltransferase (adenine-specific) activity"/>
    <property type="evidence" value="ECO:0007669"/>
    <property type="project" value="UniProtKB-EC"/>
</dbReference>
<dbReference type="GO" id="GO:0006304">
    <property type="term" value="P:DNA modification"/>
    <property type="evidence" value="ECO:0007669"/>
    <property type="project" value="InterPro"/>
</dbReference>
<dbReference type="GO" id="GO:0032259">
    <property type="term" value="P:methylation"/>
    <property type="evidence" value="ECO:0007669"/>
    <property type="project" value="UniProtKB-KW"/>
</dbReference>
<dbReference type="CDD" id="cd02440">
    <property type="entry name" value="AdoMet_MTases"/>
    <property type="match status" value="1"/>
</dbReference>
<dbReference type="Gene3D" id="3.40.50.150">
    <property type="entry name" value="Vaccinia Virus protein VP39"/>
    <property type="match status" value="1"/>
</dbReference>
<dbReference type="InterPro" id="IPR002052">
    <property type="entry name" value="DNA_methylase_N6_adenine_CS"/>
</dbReference>
<dbReference type="InterPro" id="IPR011639">
    <property type="entry name" value="MethylTrfase_TaqI-like_dom"/>
</dbReference>
<dbReference type="InterPro" id="IPR050953">
    <property type="entry name" value="N4_N6_ade-DNA_methylase"/>
</dbReference>
<dbReference type="InterPro" id="IPR029063">
    <property type="entry name" value="SAM-dependent_MTases_sf"/>
</dbReference>
<dbReference type="PANTHER" id="PTHR33841:SF5">
    <property type="entry name" value="DNA METHYLASE (MODIFICATION METHYLASE) (METHYLTRANSFERASE)-RELATED"/>
    <property type="match status" value="1"/>
</dbReference>
<dbReference type="PANTHER" id="PTHR33841">
    <property type="entry name" value="DNA METHYLTRANSFERASE YEEA-RELATED"/>
    <property type="match status" value="1"/>
</dbReference>
<dbReference type="Pfam" id="PF07669">
    <property type="entry name" value="Eco57I"/>
    <property type="match status" value="1"/>
</dbReference>
<dbReference type="PRINTS" id="PR00507">
    <property type="entry name" value="N12N6MTFRASE"/>
</dbReference>
<dbReference type="SUPFAM" id="SSF53335">
    <property type="entry name" value="S-adenosyl-L-methionine-dependent methyltransferases"/>
    <property type="match status" value="1"/>
</dbReference>
<dbReference type="PROSITE" id="PS00092">
    <property type="entry name" value="N6_MTASE"/>
    <property type="match status" value="1"/>
</dbReference>
<accession>P10835</accession>
<proteinExistence type="inferred from homology"/>
<feature type="chain" id="PRO_0000087948" description="Modification methylase CviBIII">
    <location>
        <begin position="1"/>
        <end position="377"/>
    </location>
</feature>
<gene>
    <name type="primary">CVIBIIIM</name>
</gene>
<sequence>MNVEQYTQVTTDFEKTLTKEKKSKQGIFFTPKTVREKLFGFTEHFQNTPGFSILEPSCGTGEIISECVERFPLASIKGVELDNDMSTICSKKYAEYNVDIVNEDFLLWKGGKFDFIVGNPPYVVRPSGYKNDNRIAKGRSNLYVEFLYKCITEHLKEDGILAFIIPSTIGNSSFYEPIRKLIITLDILSFEILDKHDFCDTNTRLCSIVIKNSPGTGKYTYRDYICDKDIPHHGNSYIGSLDLKFKTGFAWANVNKFFTDKSEIPFFTSSNIKLNEIHIGDKMKYLTQDTTKFFTGKALLIKTASAGKRGGRFEFGFSLYENDKWAVDNDIIVIQGPDTVLSIVQDVLMKDVTNEFINILVNNGHISMKLLKSIPLF</sequence>
<organismHost>
    <name type="scientific">Chlorella</name>
    <dbReference type="NCBI Taxonomy" id="3071"/>
</organismHost>
<keyword id="KW-0238">DNA-binding</keyword>
<keyword id="KW-0489">Methyltransferase</keyword>
<keyword id="KW-0949">S-adenosyl-L-methionine</keyword>
<keyword id="KW-0808">Transferase</keyword>
<reference key="1">
    <citation type="journal article" date="1987" name="Nucleic Acids Res.">
        <title>Molecular cloning and characterization of the gene encoding the DNA methyltransferase, M.CviBIII, from Chlorella virus NC-1A.</title>
        <authorList>
            <person name="Narva K.E."/>
            <person name="Wendell D.L."/>
            <person name="Skrdla M.P."/>
            <person name="van Etten J.L."/>
        </authorList>
    </citation>
    <scope>NUCLEOTIDE SEQUENCE [GENOMIC DNA]</scope>
    <scope>FUNCTION</scope>
    <scope>DISRUPTION PHENOTYPE</scope>
</reference>
<reference key="2">
    <citation type="journal article" date="2003" name="Nucleic Acids Res.">
        <title>A nomenclature for restriction enzymes, DNA methyltransferases, homing endonucleases and their genes.</title>
        <authorList>
            <person name="Roberts R.J."/>
            <person name="Belfort M."/>
            <person name="Bestor T."/>
            <person name="Bhagwat A.S."/>
            <person name="Bickle T.A."/>
            <person name="Bitinaite J."/>
            <person name="Blumenthal R.M."/>
            <person name="Degtyarev S.K."/>
            <person name="Dryden D.T."/>
            <person name="Dybvig K."/>
            <person name="Firman K."/>
            <person name="Gromova E.S."/>
            <person name="Gumport R.I."/>
            <person name="Halford S.E."/>
            <person name="Hattman S."/>
            <person name="Heitman J."/>
            <person name="Hornby D.P."/>
            <person name="Janulaitis A."/>
            <person name="Jeltsch A."/>
            <person name="Josephsen J."/>
            <person name="Kiss A."/>
            <person name="Klaenhammer T.R."/>
            <person name="Kobayashi I."/>
            <person name="Kong H."/>
            <person name="Krueger D.H."/>
            <person name="Lacks S."/>
            <person name="Marinus M.G."/>
            <person name="Miyahara M."/>
            <person name="Morgan R.D."/>
            <person name="Murray N.E."/>
            <person name="Nagaraja V."/>
            <person name="Piekarowicz A."/>
            <person name="Pingoud A."/>
            <person name="Raleigh E."/>
            <person name="Rao D.N."/>
            <person name="Reich N."/>
            <person name="Repin V.E."/>
            <person name="Selker E.U."/>
            <person name="Shaw P.C."/>
            <person name="Stein D.C."/>
            <person name="Stoddard B.L."/>
            <person name="Szybalski W."/>
            <person name="Trautner T.A."/>
            <person name="Van Etten J.L."/>
            <person name="Vitor J.M."/>
            <person name="Wilson G.G."/>
            <person name="Xu S.Y."/>
        </authorList>
    </citation>
    <scope>NOMENCLATURE</scope>
    <scope>SUBTYPE</scope>
</reference>
<evidence type="ECO:0000269" key="1">
    <source>
    </source>
</evidence>
<evidence type="ECO:0000303" key="2">
    <source>
    </source>
</evidence>
<evidence type="ECO:0000303" key="3">
    <source>
    </source>
</evidence>
<evidence type="ECO:0000305" key="4"/>